<sequence length="214" mass="23736">MKNRLVIIVFMVVTMLCASLALPLEEKEDEKDEKRSLEVAGAVMEGANLGMSVLQTILQAIGDVSRKIAVGVDNESGRSWTAQNAYFRSGTSDVILPHTVPSGKALLYDGQKNRGPVATGVVGVITYTMGDGNTLAVMFSVPYDYNWYSNWWNVKIYHGKVRASQKMYEDLYYYRSPFKGDNGWHERNLGYGLKSKGFMNSSGAALLQIKVMKA</sequence>
<accession>A0A345GPN1</accession>
<feature type="signal peptide" evidence="5">
    <location>
        <begin position="1"/>
        <end position="21"/>
    </location>
</feature>
<feature type="propeptide" id="PRO_0000456909" evidence="2">
    <location>
        <begin position="22"/>
        <end position="35"/>
    </location>
</feature>
<feature type="chain" id="PRO_5016749158" description="Nigrelysin">
    <location>
        <begin position="36"/>
        <end position="214"/>
    </location>
</feature>
<feature type="region of interest" description="Plays an important role in the hemolytic activity" evidence="3">
    <location>
        <begin position="38"/>
        <end position="47"/>
    </location>
</feature>
<feature type="region of interest" description="N-terminal region" evidence="4">
    <location>
        <begin position="46"/>
        <end position="65"/>
    </location>
</feature>
<feature type="region of interest" description="Trp-rich region, which is important for the binding to lipid membrane" evidence="4">
    <location>
        <begin position="140"/>
        <end position="155"/>
    </location>
</feature>
<feature type="short sequence motif" description="Cell attachment site, crucial for protein stability" evidence="3 5">
    <location>
        <begin position="179"/>
        <end position="181"/>
    </location>
</feature>
<feature type="binding site" evidence="3">
    <location>
        <position position="89"/>
    </location>
    <ligand>
        <name>phosphocholine</name>
        <dbReference type="ChEBI" id="CHEBI:295975"/>
    </ligand>
</feature>
<feature type="binding site" evidence="3">
    <location>
        <position position="122"/>
    </location>
    <ligand>
        <name>phosphocholine</name>
        <dbReference type="ChEBI" id="CHEBI:295975"/>
    </ligand>
</feature>
<feature type="binding site" evidence="3">
    <location>
        <position position="140"/>
    </location>
    <ligand>
        <name>phosphocholine</name>
        <dbReference type="ChEBI" id="CHEBI:295975"/>
    </ligand>
</feature>
<feature type="binding site" evidence="3">
    <location>
        <position position="142"/>
    </location>
    <ligand>
        <name>phosphocholine</name>
        <dbReference type="ChEBI" id="CHEBI:295975"/>
    </ligand>
</feature>
<feature type="binding site" evidence="3">
    <location>
        <position position="168"/>
    </location>
    <ligand>
        <name>phosphocholine</name>
        <dbReference type="ChEBI" id="CHEBI:295975"/>
    </ligand>
</feature>
<feature type="binding site" evidence="3">
    <location>
        <position position="172"/>
    </location>
    <ligand>
        <name>phosphocholine</name>
        <dbReference type="ChEBI" id="CHEBI:295975"/>
    </ligand>
</feature>
<feature type="binding site" evidence="3">
    <location>
        <position position="173"/>
    </location>
    <ligand>
        <name>phosphocholine</name>
        <dbReference type="ChEBI" id="CHEBI:295975"/>
    </ligand>
</feature>
<feature type="site" description="Important in the initial contact with the lipid membrane" evidence="4">
    <location>
        <position position="148"/>
    </location>
</feature>
<proteinExistence type="evidence at transcript level"/>
<dbReference type="EMBL" id="MH204651">
    <property type="protein sequence ID" value="AXG64230.1"/>
    <property type="molecule type" value="mRNA"/>
</dbReference>
<dbReference type="SMR" id="A0A345GPN1"/>
<dbReference type="GO" id="GO:0005576">
    <property type="term" value="C:extracellular region"/>
    <property type="evidence" value="ECO:0007669"/>
    <property type="project" value="UniProtKB-SubCell"/>
</dbReference>
<dbReference type="GO" id="GO:0042151">
    <property type="term" value="C:nematocyst"/>
    <property type="evidence" value="ECO:0007669"/>
    <property type="project" value="UniProtKB-SubCell"/>
</dbReference>
<dbReference type="GO" id="GO:0044218">
    <property type="term" value="C:other organism cell membrane"/>
    <property type="evidence" value="ECO:0007669"/>
    <property type="project" value="UniProtKB-KW"/>
</dbReference>
<dbReference type="GO" id="GO:0046930">
    <property type="term" value="C:pore complex"/>
    <property type="evidence" value="ECO:0007669"/>
    <property type="project" value="InterPro"/>
</dbReference>
<dbReference type="GO" id="GO:0015267">
    <property type="term" value="F:channel activity"/>
    <property type="evidence" value="ECO:0007669"/>
    <property type="project" value="InterPro"/>
</dbReference>
<dbReference type="GO" id="GO:0090729">
    <property type="term" value="F:toxin activity"/>
    <property type="evidence" value="ECO:0007669"/>
    <property type="project" value="UniProtKB-KW"/>
</dbReference>
<dbReference type="GO" id="GO:0051715">
    <property type="term" value="P:cytolysis in another organism"/>
    <property type="evidence" value="ECO:0007669"/>
    <property type="project" value="InterPro"/>
</dbReference>
<dbReference type="GO" id="GO:0006812">
    <property type="term" value="P:monoatomic cation transport"/>
    <property type="evidence" value="ECO:0007669"/>
    <property type="project" value="InterPro"/>
</dbReference>
<dbReference type="GO" id="GO:0046931">
    <property type="term" value="P:pore complex assembly"/>
    <property type="evidence" value="ECO:0007669"/>
    <property type="project" value="InterPro"/>
</dbReference>
<dbReference type="FunFam" id="2.60.270.20:FF:000001">
    <property type="entry name" value="DELTA-actitoxin-Afr1a"/>
    <property type="match status" value="1"/>
</dbReference>
<dbReference type="Gene3D" id="2.60.270.20">
    <property type="entry name" value="Cytolysin/lectin"/>
    <property type="match status" value="1"/>
</dbReference>
<dbReference type="InterPro" id="IPR050677">
    <property type="entry name" value="Actinoporin_PFT"/>
</dbReference>
<dbReference type="InterPro" id="IPR009104">
    <property type="entry name" value="Anemon_actinoporin-like"/>
</dbReference>
<dbReference type="InterPro" id="IPR015926">
    <property type="entry name" value="Cytolysin/lectin"/>
</dbReference>
<dbReference type="PANTHER" id="PTHR40388">
    <property type="entry name" value="BRYOPORIN"/>
    <property type="match status" value="1"/>
</dbReference>
<dbReference type="PANTHER" id="PTHR40388:SF1">
    <property type="entry name" value="BRYOPORIN"/>
    <property type="match status" value="1"/>
</dbReference>
<dbReference type="Pfam" id="PF06369">
    <property type="entry name" value="Anemone_cytotox"/>
    <property type="match status" value="1"/>
</dbReference>
<dbReference type="SUPFAM" id="SSF63724">
    <property type="entry name" value="Cytolysin/lectin"/>
    <property type="match status" value="1"/>
</dbReference>
<protein>
    <recommendedName>
        <fullName evidence="7">Nigrelysin</fullName>
        <shortName evidence="7">Ng</shortName>
    </recommendedName>
    <alternativeName>
        <fullName evidence="7">Actinoporin</fullName>
    </alternativeName>
    <alternativeName>
        <fullName evidence="8">DELTA-actitoxin-Ani1a</fullName>
        <shortName evidence="8">DELTA-AITX-Ani1a</shortName>
    </alternativeName>
    <alternativeName>
        <fullName evidence="7">Pore-forming toxine</fullName>
        <shortName evidence="7">PFT</shortName>
    </alternativeName>
</protein>
<organism>
    <name type="scientific">Anthopleura nigrescens</name>
    <name type="common">Sea anemone</name>
    <name type="synonym">Tealiopsis nigrescens</name>
    <dbReference type="NCBI Taxonomy" id="160219"/>
    <lineage>
        <taxon>Eukaryota</taxon>
        <taxon>Metazoa</taxon>
        <taxon>Cnidaria</taxon>
        <taxon>Anthozoa</taxon>
        <taxon>Hexacorallia</taxon>
        <taxon>Actiniaria</taxon>
        <taxon>Actiniidae</taxon>
        <taxon>Anthopleura</taxon>
    </lineage>
</organism>
<reference evidence="9" key="1">
    <citation type="journal article" date="2019" name="Biochimie">
        <title>Cloning, purification and characterization of nigrelysin, a novel actinoporin from the sea anemone Anthopleura nigrescens.</title>
        <authorList>
            <person name="Alvarado-Mesen J."/>
            <person name="Solano-Campos F."/>
            <person name="Canet L."/>
            <person name="Pedrera L."/>
            <person name="Hervis Y.P."/>
            <person name="Soto C."/>
            <person name="Borbon H."/>
            <person name="Lanio M.E."/>
            <person name="Lomonte B."/>
            <person name="Valle A."/>
            <person name="Alvarez C."/>
        </authorList>
    </citation>
    <scope>NUCLEOTIDE SEQUENCE [MRNA]</scope>
    <scope>FUNCTION</scope>
    <scope>RECOMBINANT EXPRESSION</scope>
    <scope>3D-STRUCTURE MODELING</scope>
</reference>
<evidence type="ECO:0000250" key="1">
    <source>
        <dbReference type="UniProtKB" id="B9W5G6"/>
    </source>
</evidence>
<evidence type="ECO:0000250" key="2">
    <source>
        <dbReference type="UniProtKB" id="C5NSL2"/>
    </source>
</evidence>
<evidence type="ECO:0000250" key="3">
    <source>
        <dbReference type="UniProtKB" id="P07845"/>
    </source>
</evidence>
<evidence type="ECO:0000250" key="4">
    <source>
        <dbReference type="UniProtKB" id="P61914"/>
    </source>
</evidence>
<evidence type="ECO:0000255" key="5"/>
<evidence type="ECO:0000269" key="6">
    <source>
    </source>
</evidence>
<evidence type="ECO:0000303" key="7">
    <source>
    </source>
</evidence>
<evidence type="ECO:0000305" key="8"/>
<evidence type="ECO:0000312" key="9">
    <source>
        <dbReference type="EMBL" id="AXG64230.1"/>
    </source>
</evidence>
<comment type="function">
    <text evidence="2 6">Pore-forming protein that forms cation-selective hydrophilic pores in cell membranes and causes cytolysis (PubMed:30036605). Pore formation is a multi-step process that involves specific recognition of membrane sphingomyelin (but neither cholesterol nor phosphatidylcholine) using aromatic rich region and adjacent phosphocholine (POC) binding site, firm binding to the membrane (mainly driven by hydrophobic interactions) accompanied by the transfer of the N-terminal region to the lipid-water interface and finally pore formation after oligomerization of monomers (By similarity). This protein shows potent hemolytic activity (EC(50)=0.09 nM), as well as potent cytotoxic activity on nucleated cells (L1210 cells) (PubMed:30036605). The cytotoxic process starts with cellular swelling that is time and dose dependent and occurs up to a critical volume, probably due to influx of water via pores opened by this actinoporin (PubMed:30036605). The second phase consists of the final loss of membrane integrity that leads to cytolysis (PubMed:30036605).</text>
</comment>
<comment type="subunit">
    <text evidence="1">Octamer or nonamer in membranes. Monomer in the soluble state.</text>
</comment>
<comment type="subcellular location">
    <subcellularLocation>
        <location evidence="1">Secreted</location>
    </subcellularLocation>
    <subcellularLocation>
        <location evidence="4">Nematocyst</location>
    </subcellularLocation>
    <subcellularLocation>
        <location evidence="1">Target cell membrane</location>
    </subcellularLocation>
    <text evidence="1">Forms an alpha-helical membrane channel in the prey.</text>
</comment>
<comment type="domain">
    <text evidence="4">Composed of a long N-terminal alpha-helix and a core region rich in beta-sheet structures. Before the pore formation, the alpha-helix binds the lipid membrane, partitions into the lipid-water interface and stabilizes the monomeric molecule on the membrane. Finally, it traverses the bilayer, thus forming the transmembrane pore.</text>
</comment>
<comment type="similarity">
    <text evidence="8">Belongs to the actinoporin family. Sea anemone subfamily.</text>
</comment>
<keyword id="KW-0165">Cleavage on pair of basic residues</keyword>
<keyword id="KW-0204">Cytolysis</keyword>
<keyword id="KW-0406">Ion transport</keyword>
<keyword id="KW-0472">Membrane</keyword>
<keyword id="KW-0166">Nematocyst</keyword>
<keyword id="KW-0964">Secreted</keyword>
<keyword id="KW-0732">Signal</keyword>
<keyword id="KW-1052">Target cell membrane</keyword>
<keyword id="KW-1053">Target membrane</keyword>
<keyword id="KW-0800">Toxin</keyword>
<keyword id="KW-0812">Transmembrane</keyword>
<keyword id="KW-0813">Transport</keyword>
<name>ACTPN_ANTNG</name>